<evidence type="ECO:0000255" key="1">
    <source>
        <dbReference type="HAMAP-Rule" id="MF_01321"/>
    </source>
</evidence>
<sequence length="1383" mass="154272">MTSYSFTEKKRIRKDFGKQRSILEVPFLLAIQVDSYREFLQEDVESTKRKDLGLHAALKSVFPISSYSGNAALEYVGYKLGQPVFDERECRQRGMSYGAPLRVTVRLVIYDRESSTKAIKYVKEQEVYLGEIPLMTGNGTFIVNGTERVIVSQLHRSPGVFFDHDRGKTHSSGKLLYSARIIPYRGSWLDFEFDPKDALFTRIDRRRKLPVSILLRALGYNNEEMLAEFFEINTFHINPDEGVQLELVPERLRGETLNFDLADGDKVIVEAGKRITARHVKQLEAAGVAALAVPDDYLVGRILSHDVVDGSTGELLANANDEISEDQLTAFRKAGVDAVGTLWVNDLDRGPYLSNTLRIDPTKTQLEALVEIYRMMRPGEPPTKEAAQNLFHNLFFTFERYDLSTVGRMKFNRRVGRKDVLGESVLYDKKYFAERNDEESKRLVAEHTDTSDILEVIKVLTEIRNGRGVVDDIDHLGNRRVRSVGEMAENVFRVGLVRVERAVKERLSMAESEGLTPQELINAKPVAAAIKEFFGSSQLSQFMDQNNPLSEVTHKRRVSALGPGGLTRERAGFEVRDVHPTHYGRVCTIETPEGPNIGLINSLAVFARTNQYGFLETPYRKVLDGKVSDDVEYLSAIEENEYVIAQANALTDAKNMLTEQFVPCRFQGESLLKPPSEVHFMDVSPMQTVSVAAALVPFLEHDDANRALMGANMQRQAVPTLRSQKPLVGTGIERAVARDSGVTVNALRGGVIEQIDAARIVVKVNEAEIGGGTDAGVDIYNLIKYTRSNQNTCINQRPLVNVGDVIARGDVLADGPSTDIGELALGQNMLIAFMPWNGYNFEDSILLSERVVEEDRYTTIHIEELTCVARDTKLGPEEISADIPNVSEQALNRLDESGVVYIGAEVRAGDIMVGKVTPKGESQLTPEEKLLRAIFGEKASDVKDSSLRVPPGMDGTVIDVQVFTRDGIEKDKRARQIEENEIKRVKKDFDDQFRILEAAIYARLRSQIVGKVANGGANLKKGDSVTDAYLDGLKKSDWFQLRMKDEDAADAIERAQKQIQAHEKEFEARFADKRGKITQGDDLAPGVLKMVKVFLAVKRRIQPGDKMAGRHGNKGVVSNVVPVEDMPYMATGESVDIVLNPLGVPSRMNIGQILEVHLGWAAKGLGRKIQRMLEAQAAVSELRKFLDDIYNHDNAINAQRVDLSQFSDEELLNLGKNLIDGVPMATPVFDGASEAEIKRMLELADLPQSGQTQLYDGRTGEAFDRKTTVGYMHYLKLNHLVDDKMHARSTGPYSLVTQQPLGGKAQFGGQRFGEMEVWALEAYGAAYTLQEMLTVKSDDVQGRNQMYKNIVDGEHEMVAGMPESFNVLVKEIRSLAIHMELEE</sequence>
<dbReference type="EC" id="2.7.7.6" evidence="1"/>
<dbReference type="EMBL" id="AP008229">
    <property type="protein sequence ID" value="BAE70149.1"/>
    <property type="molecule type" value="Genomic_DNA"/>
</dbReference>
<dbReference type="RefSeq" id="WP_011260034.1">
    <property type="nucleotide sequence ID" value="NC_007705.1"/>
</dbReference>
<dbReference type="PDB" id="6J9F">
    <property type="method" value="EM"/>
    <property type="resolution" value="3.95 A"/>
    <property type="chains" value="C=1-1383"/>
</dbReference>
<dbReference type="PDBsum" id="6J9F"/>
<dbReference type="EMDB" id="EMD-9786"/>
<dbReference type="SMR" id="Q2NZX8"/>
<dbReference type="KEGG" id="xom:XOO3394"/>
<dbReference type="HOGENOM" id="CLU_000524_4_3_6"/>
<dbReference type="GO" id="GO:0000428">
    <property type="term" value="C:DNA-directed RNA polymerase complex"/>
    <property type="evidence" value="ECO:0007669"/>
    <property type="project" value="UniProtKB-KW"/>
</dbReference>
<dbReference type="GO" id="GO:0003677">
    <property type="term" value="F:DNA binding"/>
    <property type="evidence" value="ECO:0007669"/>
    <property type="project" value="UniProtKB-UniRule"/>
</dbReference>
<dbReference type="GO" id="GO:0003899">
    <property type="term" value="F:DNA-directed RNA polymerase activity"/>
    <property type="evidence" value="ECO:0007669"/>
    <property type="project" value="UniProtKB-UniRule"/>
</dbReference>
<dbReference type="GO" id="GO:0032549">
    <property type="term" value="F:ribonucleoside binding"/>
    <property type="evidence" value="ECO:0007669"/>
    <property type="project" value="InterPro"/>
</dbReference>
<dbReference type="GO" id="GO:0006351">
    <property type="term" value="P:DNA-templated transcription"/>
    <property type="evidence" value="ECO:0007669"/>
    <property type="project" value="UniProtKB-UniRule"/>
</dbReference>
<dbReference type="CDD" id="cd00653">
    <property type="entry name" value="RNA_pol_B_RPB2"/>
    <property type="match status" value="1"/>
</dbReference>
<dbReference type="FunFam" id="2.40.50.100:FF:000006">
    <property type="entry name" value="DNA-directed RNA polymerase subunit beta"/>
    <property type="match status" value="1"/>
</dbReference>
<dbReference type="FunFam" id="2.40.50.150:FF:000001">
    <property type="entry name" value="DNA-directed RNA polymerase subunit beta"/>
    <property type="match status" value="1"/>
</dbReference>
<dbReference type="FunFam" id="3.90.1800.10:FF:000001">
    <property type="entry name" value="DNA-directed RNA polymerase subunit beta"/>
    <property type="match status" value="1"/>
</dbReference>
<dbReference type="Gene3D" id="2.40.50.100">
    <property type="match status" value="1"/>
</dbReference>
<dbReference type="Gene3D" id="2.40.50.150">
    <property type="match status" value="1"/>
</dbReference>
<dbReference type="Gene3D" id="3.90.1100.10">
    <property type="match status" value="2"/>
</dbReference>
<dbReference type="Gene3D" id="6.10.140.1670">
    <property type="match status" value="1"/>
</dbReference>
<dbReference type="Gene3D" id="2.30.150.10">
    <property type="entry name" value="DNA-directed RNA polymerase, beta subunit, external 1 domain"/>
    <property type="match status" value="1"/>
</dbReference>
<dbReference type="Gene3D" id="2.40.270.10">
    <property type="entry name" value="DNA-directed RNA polymerase, subunit 2, domain 6"/>
    <property type="match status" value="1"/>
</dbReference>
<dbReference type="Gene3D" id="3.90.1800.10">
    <property type="entry name" value="RNA polymerase alpha subunit dimerisation domain"/>
    <property type="match status" value="1"/>
</dbReference>
<dbReference type="Gene3D" id="3.90.1110.10">
    <property type="entry name" value="RNA polymerase Rpb2, domain 2"/>
    <property type="match status" value="1"/>
</dbReference>
<dbReference type="HAMAP" id="MF_01321">
    <property type="entry name" value="RNApol_bact_RpoB"/>
    <property type="match status" value="1"/>
</dbReference>
<dbReference type="InterPro" id="IPR042107">
    <property type="entry name" value="DNA-dir_RNA_pol_bsu_ext_1_sf"/>
</dbReference>
<dbReference type="InterPro" id="IPR019462">
    <property type="entry name" value="DNA-dir_RNA_pol_bsu_external_1"/>
</dbReference>
<dbReference type="InterPro" id="IPR015712">
    <property type="entry name" value="DNA-dir_RNA_pol_su2"/>
</dbReference>
<dbReference type="InterPro" id="IPR007120">
    <property type="entry name" value="DNA-dir_RNAP_su2_dom"/>
</dbReference>
<dbReference type="InterPro" id="IPR037033">
    <property type="entry name" value="DNA-dir_RNAP_su2_hyb_sf"/>
</dbReference>
<dbReference type="InterPro" id="IPR010243">
    <property type="entry name" value="RNA_pol_bsu_bac"/>
</dbReference>
<dbReference type="InterPro" id="IPR007121">
    <property type="entry name" value="RNA_pol_bsu_CS"/>
</dbReference>
<dbReference type="InterPro" id="IPR007644">
    <property type="entry name" value="RNA_pol_bsu_protrusion"/>
</dbReference>
<dbReference type="InterPro" id="IPR007642">
    <property type="entry name" value="RNA_pol_Rpb2_2"/>
</dbReference>
<dbReference type="InterPro" id="IPR037034">
    <property type="entry name" value="RNA_pol_Rpb2_2_sf"/>
</dbReference>
<dbReference type="InterPro" id="IPR007645">
    <property type="entry name" value="RNA_pol_Rpb2_3"/>
</dbReference>
<dbReference type="InterPro" id="IPR007641">
    <property type="entry name" value="RNA_pol_Rpb2_7"/>
</dbReference>
<dbReference type="InterPro" id="IPR014724">
    <property type="entry name" value="RNA_pol_RPB2_OB-fold"/>
</dbReference>
<dbReference type="NCBIfam" id="NF001616">
    <property type="entry name" value="PRK00405.1"/>
    <property type="match status" value="1"/>
</dbReference>
<dbReference type="NCBIfam" id="TIGR02013">
    <property type="entry name" value="rpoB"/>
    <property type="match status" value="1"/>
</dbReference>
<dbReference type="PANTHER" id="PTHR20856">
    <property type="entry name" value="DNA-DIRECTED RNA POLYMERASE I SUBUNIT 2"/>
    <property type="match status" value="1"/>
</dbReference>
<dbReference type="Pfam" id="PF04563">
    <property type="entry name" value="RNA_pol_Rpb2_1"/>
    <property type="match status" value="1"/>
</dbReference>
<dbReference type="Pfam" id="PF04561">
    <property type="entry name" value="RNA_pol_Rpb2_2"/>
    <property type="match status" value="3"/>
</dbReference>
<dbReference type="Pfam" id="PF04565">
    <property type="entry name" value="RNA_pol_Rpb2_3"/>
    <property type="match status" value="1"/>
</dbReference>
<dbReference type="Pfam" id="PF10385">
    <property type="entry name" value="RNA_pol_Rpb2_45"/>
    <property type="match status" value="1"/>
</dbReference>
<dbReference type="Pfam" id="PF00562">
    <property type="entry name" value="RNA_pol_Rpb2_6"/>
    <property type="match status" value="1"/>
</dbReference>
<dbReference type="Pfam" id="PF04560">
    <property type="entry name" value="RNA_pol_Rpb2_7"/>
    <property type="match status" value="1"/>
</dbReference>
<dbReference type="SUPFAM" id="SSF64484">
    <property type="entry name" value="beta and beta-prime subunits of DNA dependent RNA-polymerase"/>
    <property type="match status" value="1"/>
</dbReference>
<dbReference type="PROSITE" id="PS01166">
    <property type="entry name" value="RNA_POL_BETA"/>
    <property type="match status" value="1"/>
</dbReference>
<feature type="chain" id="PRO_0000237324" description="DNA-directed RNA polymerase subunit beta">
    <location>
        <begin position="1"/>
        <end position="1383"/>
    </location>
</feature>
<comment type="function">
    <text evidence="1">DNA-dependent RNA polymerase catalyzes the transcription of DNA into RNA using the four ribonucleoside triphosphates as substrates.</text>
</comment>
<comment type="catalytic activity">
    <reaction evidence="1">
        <text>RNA(n) + a ribonucleoside 5'-triphosphate = RNA(n+1) + diphosphate</text>
        <dbReference type="Rhea" id="RHEA:21248"/>
        <dbReference type="Rhea" id="RHEA-COMP:14527"/>
        <dbReference type="Rhea" id="RHEA-COMP:17342"/>
        <dbReference type="ChEBI" id="CHEBI:33019"/>
        <dbReference type="ChEBI" id="CHEBI:61557"/>
        <dbReference type="ChEBI" id="CHEBI:140395"/>
        <dbReference type="EC" id="2.7.7.6"/>
    </reaction>
</comment>
<comment type="subunit">
    <text evidence="1">The RNAP catalytic core consists of 2 alpha, 1 beta, 1 beta' and 1 omega subunit. When a sigma factor is associated with the core the holoenzyme is formed, which can initiate transcription.</text>
</comment>
<comment type="similarity">
    <text evidence="1">Belongs to the RNA polymerase beta chain family.</text>
</comment>
<name>RPOB_XANOM</name>
<accession>Q2NZX8</accession>
<reference key="1">
    <citation type="journal article" date="2005" name="Jpn. Agric. Res. Q.">
        <title>Genome sequence of Xanthomonas oryzae pv. oryzae suggests contribution of large numbers of effector genes and insertion sequences to its race diversity.</title>
        <authorList>
            <person name="Ochiai H."/>
            <person name="Inoue Y."/>
            <person name="Takeya M."/>
            <person name="Sasaki A."/>
            <person name="Kaku H."/>
        </authorList>
    </citation>
    <scope>NUCLEOTIDE SEQUENCE [LARGE SCALE GENOMIC DNA]</scope>
    <source>
        <strain>MAFF 311018</strain>
    </source>
</reference>
<gene>
    <name evidence="1" type="primary">rpoB</name>
    <name type="ordered locus">XOO3394</name>
</gene>
<protein>
    <recommendedName>
        <fullName evidence="1">DNA-directed RNA polymerase subunit beta</fullName>
        <shortName evidence="1">RNAP subunit beta</shortName>
        <ecNumber evidence="1">2.7.7.6</ecNumber>
    </recommendedName>
    <alternativeName>
        <fullName evidence="1">RNA polymerase subunit beta</fullName>
    </alternativeName>
    <alternativeName>
        <fullName evidence="1">Transcriptase subunit beta</fullName>
    </alternativeName>
</protein>
<keyword id="KW-0002">3D-structure</keyword>
<keyword id="KW-0240">DNA-directed RNA polymerase</keyword>
<keyword id="KW-0548">Nucleotidyltransferase</keyword>
<keyword id="KW-0804">Transcription</keyword>
<keyword id="KW-0808">Transferase</keyword>
<proteinExistence type="evidence at protein level"/>
<organism>
    <name type="scientific">Xanthomonas oryzae pv. oryzae (strain MAFF 311018)</name>
    <dbReference type="NCBI Taxonomy" id="342109"/>
    <lineage>
        <taxon>Bacteria</taxon>
        <taxon>Pseudomonadati</taxon>
        <taxon>Pseudomonadota</taxon>
        <taxon>Gammaproteobacteria</taxon>
        <taxon>Lysobacterales</taxon>
        <taxon>Lysobacteraceae</taxon>
        <taxon>Xanthomonas</taxon>
    </lineage>
</organism>